<accession>O55162</accession>
<organism>
    <name type="scientific">Rattus norvegicus</name>
    <name type="common">Rat</name>
    <dbReference type="NCBI Taxonomy" id="10116"/>
    <lineage>
        <taxon>Eukaryota</taxon>
        <taxon>Metazoa</taxon>
        <taxon>Chordata</taxon>
        <taxon>Craniata</taxon>
        <taxon>Vertebrata</taxon>
        <taxon>Euteleostomi</taxon>
        <taxon>Mammalia</taxon>
        <taxon>Eutheria</taxon>
        <taxon>Euarchontoglires</taxon>
        <taxon>Glires</taxon>
        <taxon>Rodentia</taxon>
        <taxon>Myomorpha</taxon>
        <taxon>Muroidea</taxon>
        <taxon>Muridae</taxon>
        <taxon>Murinae</taxon>
        <taxon>Rattus</taxon>
    </lineage>
</organism>
<name>LYPD3_RAT</name>
<evidence type="ECO:0000250" key="1"/>
<evidence type="ECO:0000255" key="2"/>
<evidence type="ECO:0000256" key="3">
    <source>
        <dbReference type="SAM" id="MobiDB-lite"/>
    </source>
</evidence>
<evidence type="ECO:0000269" key="4">
    <source>
    </source>
</evidence>
<evidence type="ECO:0000269" key="5">
    <source>
    </source>
</evidence>
<sequence>MDAARRGDTQPVMWTTRWLLLLPLLLCEGAQALECYSCVQKADDGCSPHKMKTVKCGPGVDVCTEAVGAVESIHGQFSVAVRGCGSGIPGKNDRGLDLHGLLAFIQLQQCTEDRCNAKLNLTLRGLNPAGNESAYEHNGAECYSCMGLSREKCQGAMPPVVNCYNASGRVYKGCFDGNVTLTAANVTVSLPVRGCVQDEACTRDGVTGPGFTLSGSCCQGPRCNSDLRNKTYFSPRIPPLVLLPPPTTPAPSTRTQNSSSTTSTTAPTTATTTIKPTTVQASHTSSTHETEHEVIQEEGSHLSGGATGHQDRSNMGKFPEKGGAQIPSKGGSDALGSWLSAILLTVVAGAML</sequence>
<gene>
    <name type="primary">Lypd3</name>
    <name type="synonym">C4.4a</name>
</gene>
<reference key="1">
    <citation type="journal article" date="1998" name="Oncogene">
        <title>Cloning and functional characterization of a new phosphatidyl-inositol anchored molecule of a metastasizing rat pancreatic tumor.</title>
        <authorList>
            <person name="Roesel M."/>
            <person name="Claas C."/>
            <person name="Seiter S."/>
            <person name="Herlevsen M."/>
            <person name="Zoeller M."/>
        </authorList>
    </citation>
    <scope>NUCLEOTIDE SEQUENCE [MRNA]</scope>
    <scope>FUNCTION</scope>
    <scope>GPI-ANCHOR</scope>
    <scope>TISSUE SPECIFICITY</scope>
    <source>
        <strain>BDIX</strain>
        <tissue>Colon carcinoma</tissue>
    </source>
</reference>
<reference key="2">
    <citation type="journal article" date="2005" name="Int. J. Cancer">
        <title>Ly6 family member C4.4A binds laminins 1 and 5, associates with galectin-3 and supports cell migration.</title>
        <authorList>
            <person name="Paret C."/>
            <person name="Bourouba M."/>
            <person name="Beer A."/>
            <person name="Miyazaki K."/>
            <person name="Schnoelzer M."/>
            <person name="Fiedler S."/>
            <person name="Zoeller M."/>
        </authorList>
    </citation>
    <scope>FUNCTION</scope>
    <scope>INTERACTION WITH LAMININ-1; LAMININ-5 AND GALECTIN-3</scope>
</reference>
<proteinExistence type="evidence at protein level"/>
<feature type="signal peptide" evidence="2">
    <location>
        <begin position="1"/>
        <end position="32"/>
    </location>
</feature>
<feature type="chain" id="PRO_0000226755" description="Ly6/PLAUR domain-containing protein 3">
    <location>
        <begin position="33"/>
        <end position="330"/>
    </location>
</feature>
<feature type="propeptide" id="PRO_0000226756" description="Removed in mature form" evidence="2">
    <location>
        <begin position="331"/>
        <end position="352"/>
    </location>
</feature>
<feature type="domain" description="UPAR/Ly6 1">
    <location>
        <begin position="35"/>
        <end position="128"/>
    </location>
</feature>
<feature type="domain" description="UPAR/Ly6 2">
    <location>
        <begin position="142"/>
        <end position="224"/>
    </location>
</feature>
<feature type="region of interest" description="Disordered" evidence="3">
    <location>
        <begin position="236"/>
        <end position="330"/>
    </location>
</feature>
<feature type="compositionally biased region" description="Pro residues" evidence="3">
    <location>
        <begin position="236"/>
        <end position="249"/>
    </location>
</feature>
<feature type="compositionally biased region" description="Low complexity" evidence="3">
    <location>
        <begin position="250"/>
        <end position="285"/>
    </location>
</feature>
<feature type="compositionally biased region" description="Basic and acidic residues" evidence="3">
    <location>
        <begin position="286"/>
        <end position="300"/>
    </location>
</feature>
<feature type="compositionally biased region" description="Basic and acidic residues" evidence="3">
    <location>
        <begin position="309"/>
        <end position="320"/>
    </location>
</feature>
<feature type="lipid moiety-binding region" description="GPI-anchor amidated glycine" evidence="2">
    <location>
        <position position="330"/>
    </location>
</feature>
<feature type="glycosylation site" description="N-linked (GlcNAc...) asparagine" evidence="2">
    <location>
        <position position="120"/>
    </location>
</feature>
<feature type="glycosylation site" description="N-linked (GlcNAc...) asparagine" evidence="2">
    <location>
        <position position="131"/>
    </location>
</feature>
<feature type="glycosylation site" description="N-linked (GlcNAc...) asparagine" evidence="2">
    <location>
        <position position="178"/>
    </location>
</feature>
<feature type="glycosylation site" description="N-linked (GlcNAc...) asparagine" evidence="2">
    <location>
        <position position="185"/>
    </location>
</feature>
<comment type="function">
    <text evidence="4 5">Supports cell migration. May be involved in tumor progression.</text>
</comment>
<comment type="subunit">
    <text evidence="1 4">Interacts with AGR2 and AGR3 (By similarity). Binds laminin-1 and laminin-5. Interacts with LGALS3.</text>
</comment>
<comment type="subcellular location">
    <subcellularLocation>
        <location>Cell membrane</location>
        <topology>Lipid-anchor</topology>
        <topology>GPI-anchor</topology>
    </subcellularLocation>
</comment>
<comment type="tissue specificity">
    <text evidence="5">Found predominantly on the basal layers of squamous epithelium. Expressed in the gravid uterus and on epithelial of the upper gastrointestinal tract. It has been found in tumor lines which metastasize via the lymphatic system.</text>
</comment>
<protein>
    <recommendedName>
        <fullName>Ly6/PLAUR domain-containing protein 3</fullName>
    </recommendedName>
    <alternativeName>
        <fullName>GPI-anchored metastasis-associated protein C4.4A</fullName>
    </alternativeName>
</protein>
<keyword id="KW-1003">Cell membrane</keyword>
<keyword id="KW-0325">Glycoprotein</keyword>
<keyword id="KW-0336">GPI-anchor</keyword>
<keyword id="KW-0449">Lipoprotein</keyword>
<keyword id="KW-0472">Membrane</keyword>
<keyword id="KW-1185">Reference proteome</keyword>
<keyword id="KW-0677">Repeat</keyword>
<keyword id="KW-0732">Signal</keyword>
<dbReference type="EMBL" id="AJ001043">
    <property type="protein sequence ID" value="CAA04497.1"/>
    <property type="molecule type" value="mRNA"/>
</dbReference>
<dbReference type="RefSeq" id="NP_068527.1">
    <property type="nucleotide sequence ID" value="NM_021759.1"/>
</dbReference>
<dbReference type="SMR" id="O55162"/>
<dbReference type="FunCoup" id="O55162">
    <property type="interactions" value="12"/>
</dbReference>
<dbReference type="STRING" id="10116.ENSRNOP00000027100"/>
<dbReference type="GlyCosmos" id="O55162">
    <property type="glycosylation" value="4 sites, No reported glycans"/>
</dbReference>
<dbReference type="GlyGen" id="O55162">
    <property type="glycosylation" value="5 sites"/>
</dbReference>
<dbReference type="PhosphoSitePlus" id="O55162"/>
<dbReference type="PaxDb" id="10116-ENSRNOP00000027100"/>
<dbReference type="Ensembl" id="ENSRNOT00000027100.4">
    <property type="protein sequence ID" value="ENSRNOP00000027100.1"/>
    <property type="gene ID" value="ENSRNOG00000019999.4"/>
</dbReference>
<dbReference type="GeneID" id="60378"/>
<dbReference type="KEGG" id="rno:60378"/>
<dbReference type="UCSC" id="RGD:69053">
    <property type="organism name" value="rat"/>
</dbReference>
<dbReference type="AGR" id="RGD:69053"/>
<dbReference type="CTD" id="27076"/>
<dbReference type="RGD" id="69053">
    <property type="gene designation" value="Lypd3"/>
</dbReference>
<dbReference type="eggNOG" id="ENOG502RYZP">
    <property type="taxonomic scope" value="Eukaryota"/>
</dbReference>
<dbReference type="GeneTree" id="ENSGT00940000153599"/>
<dbReference type="HOGENOM" id="CLU_062960_0_0_1"/>
<dbReference type="InParanoid" id="O55162"/>
<dbReference type="OMA" id="VQDELCT"/>
<dbReference type="OrthoDB" id="9834667at2759"/>
<dbReference type="PhylomeDB" id="O55162"/>
<dbReference type="TreeFam" id="TF337983"/>
<dbReference type="Reactome" id="R-RNO-163125">
    <property type="pathway name" value="Post-translational modification: synthesis of GPI-anchored proteins"/>
</dbReference>
<dbReference type="PRO" id="PR:O55162"/>
<dbReference type="Proteomes" id="UP000002494">
    <property type="component" value="Chromosome 1"/>
</dbReference>
<dbReference type="Bgee" id="ENSRNOG00000019999">
    <property type="expression patterns" value="Expressed in esophagus and 17 other cell types or tissues"/>
</dbReference>
<dbReference type="GO" id="GO:0016020">
    <property type="term" value="C:membrane"/>
    <property type="evidence" value="ECO:0000314"/>
    <property type="project" value="MGI"/>
</dbReference>
<dbReference type="GO" id="GO:0005886">
    <property type="term" value="C:plasma membrane"/>
    <property type="evidence" value="ECO:0000318"/>
    <property type="project" value="GO_Central"/>
</dbReference>
<dbReference type="GO" id="GO:0098552">
    <property type="term" value="C:side of membrane"/>
    <property type="evidence" value="ECO:0007669"/>
    <property type="project" value="UniProtKB-KW"/>
</dbReference>
<dbReference type="GO" id="GO:0043236">
    <property type="term" value="F:laminin binding"/>
    <property type="evidence" value="ECO:0000314"/>
    <property type="project" value="MGI"/>
</dbReference>
<dbReference type="GO" id="GO:0007160">
    <property type="term" value="P:cell-matrix adhesion"/>
    <property type="evidence" value="ECO:0000314"/>
    <property type="project" value="MGI"/>
</dbReference>
<dbReference type="GO" id="GO:0034392">
    <property type="term" value="P:negative regulation of smooth muscle cell apoptotic process"/>
    <property type="evidence" value="ECO:0000266"/>
    <property type="project" value="RGD"/>
</dbReference>
<dbReference type="CDD" id="cd23562">
    <property type="entry name" value="TFP_LU_ECD_LYPD3_rpt1"/>
    <property type="match status" value="1"/>
</dbReference>
<dbReference type="CDD" id="cd23563">
    <property type="entry name" value="TFP_LU_ECD_LYPD3_rpt2"/>
    <property type="match status" value="1"/>
</dbReference>
<dbReference type="FunFam" id="2.10.60.10:FF:000016">
    <property type="entry name" value="LY6/PLAUR domain containing 3"/>
    <property type="match status" value="1"/>
</dbReference>
<dbReference type="FunFam" id="2.10.60.10:FF:000017">
    <property type="entry name" value="Ly6/PLAUR domain-containing protein 3"/>
    <property type="match status" value="1"/>
</dbReference>
<dbReference type="Gene3D" id="2.10.60.10">
    <property type="entry name" value="CD59"/>
    <property type="match status" value="2"/>
</dbReference>
<dbReference type="InterPro" id="IPR016054">
    <property type="entry name" value="LY6_UPA_recep-like"/>
</dbReference>
<dbReference type="InterPro" id="IPR045860">
    <property type="entry name" value="Snake_toxin-like_sf"/>
</dbReference>
<dbReference type="PANTHER" id="PTHR10624:SF8">
    <property type="entry name" value="LY6_PLAUR DOMAIN-CONTAINING PROTEIN 3"/>
    <property type="match status" value="1"/>
</dbReference>
<dbReference type="PANTHER" id="PTHR10624">
    <property type="entry name" value="UROKINASE PLASMINOGEN ACTIVATOR SURFACE RECEPTOR-RELATED"/>
    <property type="match status" value="1"/>
</dbReference>
<dbReference type="Pfam" id="PF00021">
    <property type="entry name" value="UPAR_LY6"/>
    <property type="match status" value="2"/>
</dbReference>
<dbReference type="SMART" id="SM00134">
    <property type="entry name" value="LU"/>
    <property type="match status" value="1"/>
</dbReference>
<dbReference type="SUPFAM" id="SSF57302">
    <property type="entry name" value="Snake toxin-like"/>
    <property type="match status" value="2"/>
</dbReference>